<organism>
    <name type="scientific">Streptococcus pyogenes serotype M12 (strain MGAS2096)</name>
    <dbReference type="NCBI Taxonomy" id="370553"/>
    <lineage>
        <taxon>Bacteria</taxon>
        <taxon>Bacillati</taxon>
        <taxon>Bacillota</taxon>
        <taxon>Bacilli</taxon>
        <taxon>Lactobacillales</taxon>
        <taxon>Streptococcaceae</taxon>
        <taxon>Streptococcus</taxon>
    </lineage>
</organism>
<sequence length="242" mass="25896">MEPKYQRILIKLSGEALAGEKGVGIDIPTVQAIAKEIAEVHVSGVQIALVIGGGNLWRGEPAADAGMDRVQADYTGMLGTVMNALVMADSLQHYGVDTRVQTAIPMQNVAEPYIRGRALRHLEKNRIVVFGAGIGSPYFSTDTTAALRAAEIEADAILMAKNGVDGVYNADPKKDANAVKFDELTHGEVIKRGLKIMDATASTLSMDNDIDLVVFNMNEAGNIQRVVFGEHIGTTVSNKVCD</sequence>
<evidence type="ECO:0000255" key="1">
    <source>
        <dbReference type="HAMAP-Rule" id="MF_01220"/>
    </source>
</evidence>
<accession>Q1JD59</accession>
<name>PYRH_STRPB</name>
<dbReference type="EC" id="2.7.4.22" evidence="1"/>
<dbReference type="EMBL" id="CP000261">
    <property type="protein sequence ID" value="ABF35449.1"/>
    <property type="molecule type" value="Genomic_DNA"/>
</dbReference>
<dbReference type="SMR" id="Q1JD59"/>
<dbReference type="KEGG" id="spj:MGAS2096_Spy0397"/>
<dbReference type="HOGENOM" id="CLU_033861_0_0_9"/>
<dbReference type="UniPathway" id="UPA00159">
    <property type="reaction ID" value="UER00275"/>
</dbReference>
<dbReference type="GO" id="GO:0005737">
    <property type="term" value="C:cytoplasm"/>
    <property type="evidence" value="ECO:0007669"/>
    <property type="project" value="UniProtKB-SubCell"/>
</dbReference>
<dbReference type="GO" id="GO:0005524">
    <property type="term" value="F:ATP binding"/>
    <property type="evidence" value="ECO:0007669"/>
    <property type="project" value="UniProtKB-KW"/>
</dbReference>
<dbReference type="GO" id="GO:0033862">
    <property type="term" value="F:UMP kinase activity"/>
    <property type="evidence" value="ECO:0007669"/>
    <property type="project" value="UniProtKB-EC"/>
</dbReference>
<dbReference type="GO" id="GO:0044210">
    <property type="term" value="P:'de novo' CTP biosynthetic process"/>
    <property type="evidence" value="ECO:0007669"/>
    <property type="project" value="UniProtKB-UniRule"/>
</dbReference>
<dbReference type="GO" id="GO:0006225">
    <property type="term" value="P:UDP biosynthetic process"/>
    <property type="evidence" value="ECO:0007669"/>
    <property type="project" value="TreeGrafter"/>
</dbReference>
<dbReference type="CDD" id="cd04254">
    <property type="entry name" value="AAK_UMPK-PyrH-Ec"/>
    <property type="match status" value="1"/>
</dbReference>
<dbReference type="FunFam" id="3.40.1160.10:FF:000019">
    <property type="entry name" value="Uridylate kinase"/>
    <property type="match status" value="1"/>
</dbReference>
<dbReference type="Gene3D" id="3.40.1160.10">
    <property type="entry name" value="Acetylglutamate kinase-like"/>
    <property type="match status" value="1"/>
</dbReference>
<dbReference type="HAMAP" id="MF_01220_B">
    <property type="entry name" value="PyrH_B"/>
    <property type="match status" value="1"/>
</dbReference>
<dbReference type="InterPro" id="IPR036393">
    <property type="entry name" value="AceGlu_kinase-like_sf"/>
</dbReference>
<dbReference type="InterPro" id="IPR001048">
    <property type="entry name" value="Asp/Glu/Uridylate_kinase"/>
</dbReference>
<dbReference type="InterPro" id="IPR011817">
    <property type="entry name" value="Uridylate_kinase"/>
</dbReference>
<dbReference type="InterPro" id="IPR015963">
    <property type="entry name" value="Uridylate_kinase_bac"/>
</dbReference>
<dbReference type="NCBIfam" id="TIGR02075">
    <property type="entry name" value="pyrH_bact"/>
    <property type="match status" value="1"/>
</dbReference>
<dbReference type="PANTHER" id="PTHR42833">
    <property type="entry name" value="URIDYLATE KINASE"/>
    <property type="match status" value="1"/>
</dbReference>
<dbReference type="PANTHER" id="PTHR42833:SF4">
    <property type="entry name" value="URIDYLATE KINASE PUMPKIN, CHLOROPLASTIC"/>
    <property type="match status" value="1"/>
</dbReference>
<dbReference type="Pfam" id="PF00696">
    <property type="entry name" value="AA_kinase"/>
    <property type="match status" value="1"/>
</dbReference>
<dbReference type="PIRSF" id="PIRSF005650">
    <property type="entry name" value="Uridylate_kin"/>
    <property type="match status" value="1"/>
</dbReference>
<dbReference type="SUPFAM" id="SSF53633">
    <property type="entry name" value="Carbamate kinase-like"/>
    <property type="match status" value="1"/>
</dbReference>
<reference key="1">
    <citation type="journal article" date="2006" name="Proc. Natl. Acad. Sci. U.S.A.">
        <title>Molecular genetic anatomy of inter- and intraserotype variation in the human bacterial pathogen group A Streptococcus.</title>
        <authorList>
            <person name="Beres S.B."/>
            <person name="Richter E.W."/>
            <person name="Nagiec M.J."/>
            <person name="Sumby P."/>
            <person name="Porcella S.F."/>
            <person name="DeLeo F.R."/>
            <person name="Musser J.M."/>
        </authorList>
    </citation>
    <scope>NUCLEOTIDE SEQUENCE [LARGE SCALE GENOMIC DNA]</scope>
    <source>
        <strain>MGAS2096</strain>
    </source>
</reference>
<proteinExistence type="inferred from homology"/>
<comment type="function">
    <text evidence="1">Catalyzes the reversible phosphorylation of UMP to UDP.</text>
</comment>
<comment type="catalytic activity">
    <reaction evidence="1">
        <text>UMP + ATP = UDP + ADP</text>
        <dbReference type="Rhea" id="RHEA:24400"/>
        <dbReference type="ChEBI" id="CHEBI:30616"/>
        <dbReference type="ChEBI" id="CHEBI:57865"/>
        <dbReference type="ChEBI" id="CHEBI:58223"/>
        <dbReference type="ChEBI" id="CHEBI:456216"/>
        <dbReference type="EC" id="2.7.4.22"/>
    </reaction>
</comment>
<comment type="activity regulation">
    <text evidence="1">Allosterically activated by GTP. Inhibited by UTP.</text>
</comment>
<comment type="pathway">
    <text evidence="1">Pyrimidine metabolism; CTP biosynthesis via de novo pathway; UDP from UMP (UMPK route): step 1/1.</text>
</comment>
<comment type="subunit">
    <text evidence="1">Homohexamer.</text>
</comment>
<comment type="subcellular location">
    <subcellularLocation>
        <location evidence="1">Cytoplasm</location>
    </subcellularLocation>
</comment>
<comment type="similarity">
    <text evidence="1">Belongs to the UMP kinase family.</text>
</comment>
<keyword id="KW-0021">Allosteric enzyme</keyword>
<keyword id="KW-0067">ATP-binding</keyword>
<keyword id="KW-0963">Cytoplasm</keyword>
<keyword id="KW-0418">Kinase</keyword>
<keyword id="KW-0547">Nucleotide-binding</keyword>
<keyword id="KW-0665">Pyrimidine biosynthesis</keyword>
<keyword id="KW-0808">Transferase</keyword>
<protein>
    <recommendedName>
        <fullName evidence="1">Uridylate kinase</fullName>
        <shortName evidence="1">UK</shortName>
        <ecNumber evidence="1">2.7.4.22</ecNumber>
    </recommendedName>
    <alternativeName>
        <fullName evidence="1">Uridine monophosphate kinase</fullName>
        <shortName evidence="1">UMP kinase</shortName>
        <shortName evidence="1">UMPK</shortName>
    </alternativeName>
</protein>
<feature type="chain" id="PRO_1000054032" description="Uridylate kinase">
    <location>
        <begin position="1"/>
        <end position="242"/>
    </location>
</feature>
<feature type="region of interest" description="Involved in allosteric activation by GTP" evidence="1">
    <location>
        <begin position="19"/>
        <end position="24"/>
    </location>
</feature>
<feature type="binding site" evidence="1">
    <location>
        <begin position="11"/>
        <end position="14"/>
    </location>
    <ligand>
        <name>ATP</name>
        <dbReference type="ChEBI" id="CHEBI:30616"/>
    </ligand>
</feature>
<feature type="binding site" evidence="1">
    <location>
        <position position="53"/>
    </location>
    <ligand>
        <name>UMP</name>
        <dbReference type="ChEBI" id="CHEBI:57865"/>
    </ligand>
</feature>
<feature type="binding site" evidence="1">
    <location>
        <position position="54"/>
    </location>
    <ligand>
        <name>ATP</name>
        <dbReference type="ChEBI" id="CHEBI:30616"/>
    </ligand>
</feature>
<feature type="binding site" evidence="1">
    <location>
        <position position="58"/>
    </location>
    <ligand>
        <name>ATP</name>
        <dbReference type="ChEBI" id="CHEBI:30616"/>
    </ligand>
</feature>
<feature type="binding site" evidence="1">
    <location>
        <position position="73"/>
    </location>
    <ligand>
        <name>UMP</name>
        <dbReference type="ChEBI" id="CHEBI:57865"/>
    </ligand>
</feature>
<feature type="binding site" evidence="1">
    <location>
        <begin position="134"/>
        <end position="141"/>
    </location>
    <ligand>
        <name>UMP</name>
        <dbReference type="ChEBI" id="CHEBI:57865"/>
    </ligand>
</feature>
<feature type="binding site" evidence="1">
    <location>
        <position position="162"/>
    </location>
    <ligand>
        <name>ATP</name>
        <dbReference type="ChEBI" id="CHEBI:30616"/>
    </ligand>
</feature>
<feature type="binding site" evidence="1">
    <location>
        <position position="168"/>
    </location>
    <ligand>
        <name>ATP</name>
        <dbReference type="ChEBI" id="CHEBI:30616"/>
    </ligand>
</feature>
<feature type="binding site" evidence="1">
    <location>
        <position position="171"/>
    </location>
    <ligand>
        <name>ATP</name>
        <dbReference type="ChEBI" id="CHEBI:30616"/>
    </ligand>
</feature>
<gene>
    <name evidence="1" type="primary">pyrH</name>
    <name type="ordered locus">MGAS2096_Spy0397</name>
</gene>